<protein>
    <recommendedName>
        <fullName evidence="1">Inosine-5'-monophosphate dehydrogenase</fullName>
        <shortName evidence="1">IMP dehydrogenase</shortName>
        <shortName evidence="1">IMPD</shortName>
        <shortName evidence="1">IMPDH</shortName>
        <ecNumber evidence="1">1.1.1.205</ecNumber>
    </recommendedName>
</protein>
<accession>Q8CMQ7</accession>
<keyword id="KW-0129">CBS domain</keyword>
<keyword id="KW-0332">GMP biosynthesis</keyword>
<keyword id="KW-0479">Metal-binding</keyword>
<keyword id="KW-0520">NAD</keyword>
<keyword id="KW-0560">Oxidoreductase</keyword>
<keyword id="KW-0630">Potassium</keyword>
<keyword id="KW-0658">Purine biosynthesis</keyword>
<keyword id="KW-0677">Repeat</keyword>
<sequence>MWENKFAKESLTFDDVLLIPAASDVLPSDVDLSVKLSDKIKLNIPVISAGMDTVTESKMAIAMARQGGLGVIHKNMGVEEQADEVQKVKRSENGVISNPFFLTPEESVYEAEALMGKYRISGVPIVDNQEDRKLIGILTNRDLRFIEDFSIKISDVMTKDNLITAPVGTTLDEAEAILQKHKIEKLPLVENGRLEGLITIKDIEKVLEFPYAAKDEHGRLLAAAAIGTSKDTEIRAQKLVEAGVDALIIDTAHGHSKGVINQVKHIKETYPEITVVAGNVATAEATRALFEAGADVVKVGIGPGSICTTRVVAGVGVPQITAVYDCATEARKHGKAIIADGGIKFSGDIIKALAAGGHAVMLGSLLAGTEESPGATEVFQGRQYKVYRGMGSLGAMEKGSNDRYFQEDKTPRKFVPEGIEGRTAYKGPLQDTIYQLMGGVRAGMGYTGSENLKKLREEAQFTRMGPAGLAESHPHNVQITKESPNYSF</sequence>
<proteinExistence type="inferred from homology"/>
<gene>
    <name evidence="1" type="primary">guaB</name>
    <name type="ordered locus">SE_2348</name>
</gene>
<feature type="chain" id="PRO_0000093712" description="Inosine-5'-monophosphate dehydrogenase">
    <location>
        <begin position="1"/>
        <end position="488"/>
    </location>
</feature>
<feature type="domain" description="CBS 1" evidence="1">
    <location>
        <begin position="95"/>
        <end position="153"/>
    </location>
</feature>
<feature type="domain" description="CBS 2" evidence="1">
    <location>
        <begin position="157"/>
        <end position="216"/>
    </location>
</feature>
<feature type="region of interest" description="Disordered" evidence="2">
    <location>
        <begin position="467"/>
        <end position="488"/>
    </location>
</feature>
<feature type="compositionally biased region" description="Polar residues" evidence="2">
    <location>
        <begin position="475"/>
        <end position="488"/>
    </location>
</feature>
<feature type="active site" description="Thioimidate intermediate" evidence="1">
    <location>
        <position position="307"/>
    </location>
</feature>
<feature type="active site" description="Proton acceptor" evidence="1">
    <location>
        <position position="403"/>
    </location>
</feature>
<feature type="binding site" evidence="1">
    <location>
        <position position="250"/>
    </location>
    <ligand>
        <name>NAD(+)</name>
        <dbReference type="ChEBI" id="CHEBI:57540"/>
    </ligand>
</feature>
<feature type="binding site" evidence="1">
    <location>
        <begin position="300"/>
        <end position="302"/>
    </location>
    <ligand>
        <name>NAD(+)</name>
        <dbReference type="ChEBI" id="CHEBI:57540"/>
    </ligand>
</feature>
<feature type="binding site" description="in other chain" evidence="1">
    <location>
        <position position="302"/>
    </location>
    <ligand>
        <name>K(+)</name>
        <dbReference type="ChEBI" id="CHEBI:29103"/>
        <note>ligand shared between two tetrameric partners</note>
    </ligand>
</feature>
<feature type="binding site" description="in other chain" evidence="1">
    <location>
        <position position="304"/>
    </location>
    <ligand>
        <name>K(+)</name>
        <dbReference type="ChEBI" id="CHEBI:29103"/>
        <note>ligand shared between two tetrameric partners</note>
    </ligand>
</feature>
<feature type="binding site" evidence="1">
    <location>
        <position position="305"/>
    </location>
    <ligand>
        <name>IMP</name>
        <dbReference type="ChEBI" id="CHEBI:58053"/>
    </ligand>
</feature>
<feature type="binding site" description="in other chain" evidence="1">
    <location>
        <position position="307"/>
    </location>
    <ligand>
        <name>K(+)</name>
        <dbReference type="ChEBI" id="CHEBI:29103"/>
        <note>ligand shared between two tetrameric partners</note>
    </ligand>
</feature>
<feature type="binding site" evidence="1">
    <location>
        <begin position="340"/>
        <end position="342"/>
    </location>
    <ligand>
        <name>IMP</name>
        <dbReference type="ChEBI" id="CHEBI:58053"/>
    </ligand>
</feature>
<feature type="binding site" evidence="1">
    <location>
        <begin position="363"/>
        <end position="364"/>
    </location>
    <ligand>
        <name>IMP</name>
        <dbReference type="ChEBI" id="CHEBI:58053"/>
    </ligand>
</feature>
<feature type="binding site" evidence="1">
    <location>
        <begin position="387"/>
        <end position="391"/>
    </location>
    <ligand>
        <name>IMP</name>
        <dbReference type="ChEBI" id="CHEBI:58053"/>
    </ligand>
</feature>
<feature type="binding site" evidence="1">
    <location>
        <position position="417"/>
    </location>
    <ligand>
        <name>IMP</name>
        <dbReference type="ChEBI" id="CHEBI:58053"/>
    </ligand>
</feature>
<feature type="binding site" evidence="1">
    <location>
        <position position="471"/>
    </location>
    <ligand>
        <name>K(+)</name>
        <dbReference type="ChEBI" id="CHEBI:29103"/>
        <note>ligand shared between two tetrameric partners</note>
    </ligand>
</feature>
<feature type="binding site" evidence="1">
    <location>
        <position position="472"/>
    </location>
    <ligand>
        <name>K(+)</name>
        <dbReference type="ChEBI" id="CHEBI:29103"/>
        <note>ligand shared between two tetrameric partners</note>
    </ligand>
</feature>
<feature type="binding site" evidence="1">
    <location>
        <position position="473"/>
    </location>
    <ligand>
        <name>K(+)</name>
        <dbReference type="ChEBI" id="CHEBI:29103"/>
        <note>ligand shared between two tetrameric partners</note>
    </ligand>
</feature>
<organism>
    <name type="scientific">Staphylococcus epidermidis (strain ATCC 12228 / FDA PCI 1200)</name>
    <dbReference type="NCBI Taxonomy" id="176280"/>
    <lineage>
        <taxon>Bacteria</taxon>
        <taxon>Bacillati</taxon>
        <taxon>Bacillota</taxon>
        <taxon>Bacilli</taxon>
        <taxon>Bacillales</taxon>
        <taxon>Staphylococcaceae</taxon>
        <taxon>Staphylococcus</taxon>
    </lineage>
</organism>
<reference key="1">
    <citation type="journal article" date="2003" name="Mol. Microbiol.">
        <title>Genome-based analysis of virulence genes in a non-biofilm-forming Staphylococcus epidermidis strain (ATCC 12228).</title>
        <authorList>
            <person name="Zhang Y.-Q."/>
            <person name="Ren S.-X."/>
            <person name="Li H.-L."/>
            <person name="Wang Y.-X."/>
            <person name="Fu G."/>
            <person name="Yang J."/>
            <person name="Qin Z.-Q."/>
            <person name="Miao Y.-G."/>
            <person name="Wang W.-Y."/>
            <person name="Chen R.-S."/>
            <person name="Shen Y."/>
            <person name="Chen Z."/>
            <person name="Yuan Z.-H."/>
            <person name="Zhao G.-P."/>
            <person name="Qu D."/>
            <person name="Danchin A."/>
            <person name="Wen Y.-M."/>
        </authorList>
    </citation>
    <scope>NUCLEOTIDE SEQUENCE [LARGE SCALE GENOMIC DNA]</scope>
    <source>
        <strain>ATCC 12228 / FDA PCI 1200</strain>
    </source>
</reference>
<evidence type="ECO:0000255" key="1">
    <source>
        <dbReference type="HAMAP-Rule" id="MF_01964"/>
    </source>
</evidence>
<evidence type="ECO:0000256" key="2">
    <source>
        <dbReference type="SAM" id="MobiDB-lite"/>
    </source>
</evidence>
<dbReference type="EC" id="1.1.1.205" evidence="1"/>
<dbReference type="EMBL" id="AE015929">
    <property type="protein sequence ID" value="AAO05991.1"/>
    <property type="molecule type" value="Genomic_DNA"/>
</dbReference>
<dbReference type="RefSeq" id="NP_765903.1">
    <property type="nucleotide sequence ID" value="NC_004461.1"/>
</dbReference>
<dbReference type="RefSeq" id="WP_001829407.1">
    <property type="nucleotide sequence ID" value="NZ_WBME01000004.1"/>
</dbReference>
<dbReference type="SMR" id="Q8CMQ7"/>
<dbReference type="GeneID" id="50019659"/>
<dbReference type="KEGG" id="sep:SE_2348"/>
<dbReference type="PATRIC" id="fig|176280.10.peg.2291"/>
<dbReference type="eggNOG" id="COG0516">
    <property type="taxonomic scope" value="Bacteria"/>
</dbReference>
<dbReference type="eggNOG" id="COG0517">
    <property type="taxonomic scope" value="Bacteria"/>
</dbReference>
<dbReference type="HOGENOM" id="CLU_022552_1_0_9"/>
<dbReference type="OrthoDB" id="9805398at2"/>
<dbReference type="UniPathway" id="UPA00601">
    <property type="reaction ID" value="UER00295"/>
</dbReference>
<dbReference type="Proteomes" id="UP000001411">
    <property type="component" value="Chromosome"/>
</dbReference>
<dbReference type="GO" id="GO:0003938">
    <property type="term" value="F:IMP dehydrogenase activity"/>
    <property type="evidence" value="ECO:0007669"/>
    <property type="project" value="UniProtKB-UniRule"/>
</dbReference>
<dbReference type="GO" id="GO:0046872">
    <property type="term" value="F:metal ion binding"/>
    <property type="evidence" value="ECO:0007669"/>
    <property type="project" value="UniProtKB-UniRule"/>
</dbReference>
<dbReference type="GO" id="GO:0000166">
    <property type="term" value="F:nucleotide binding"/>
    <property type="evidence" value="ECO:0007669"/>
    <property type="project" value="UniProtKB-UniRule"/>
</dbReference>
<dbReference type="GO" id="GO:0006177">
    <property type="term" value="P:GMP biosynthetic process"/>
    <property type="evidence" value="ECO:0007669"/>
    <property type="project" value="UniProtKB-UniRule"/>
</dbReference>
<dbReference type="GO" id="GO:0006183">
    <property type="term" value="P:GTP biosynthetic process"/>
    <property type="evidence" value="ECO:0007669"/>
    <property type="project" value="TreeGrafter"/>
</dbReference>
<dbReference type="CDD" id="cd04601">
    <property type="entry name" value="CBS_pair_IMPDH"/>
    <property type="match status" value="1"/>
</dbReference>
<dbReference type="CDD" id="cd00381">
    <property type="entry name" value="IMPDH"/>
    <property type="match status" value="1"/>
</dbReference>
<dbReference type="FunFam" id="3.20.20.70:FF:000003">
    <property type="entry name" value="GMP reductase"/>
    <property type="match status" value="1"/>
</dbReference>
<dbReference type="Gene3D" id="3.20.20.70">
    <property type="entry name" value="Aldolase class I"/>
    <property type="match status" value="1"/>
</dbReference>
<dbReference type="HAMAP" id="MF_01964">
    <property type="entry name" value="IMPDH"/>
    <property type="match status" value="1"/>
</dbReference>
<dbReference type="InterPro" id="IPR013785">
    <property type="entry name" value="Aldolase_TIM"/>
</dbReference>
<dbReference type="InterPro" id="IPR000644">
    <property type="entry name" value="CBS_dom"/>
</dbReference>
<dbReference type="InterPro" id="IPR046342">
    <property type="entry name" value="CBS_dom_sf"/>
</dbReference>
<dbReference type="InterPro" id="IPR005990">
    <property type="entry name" value="IMP_DH"/>
</dbReference>
<dbReference type="InterPro" id="IPR015875">
    <property type="entry name" value="IMP_DH/GMP_Rdtase_CS"/>
</dbReference>
<dbReference type="InterPro" id="IPR001093">
    <property type="entry name" value="IMP_DH_GMPRt"/>
</dbReference>
<dbReference type="NCBIfam" id="TIGR01302">
    <property type="entry name" value="IMP_dehydrog"/>
    <property type="match status" value="1"/>
</dbReference>
<dbReference type="PANTHER" id="PTHR11911:SF111">
    <property type="entry name" value="INOSINE-5'-MONOPHOSPHATE DEHYDROGENASE"/>
    <property type="match status" value="1"/>
</dbReference>
<dbReference type="PANTHER" id="PTHR11911">
    <property type="entry name" value="INOSINE-5-MONOPHOSPHATE DEHYDROGENASE RELATED"/>
    <property type="match status" value="1"/>
</dbReference>
<dbReference type="Pfam" id="PF00571">
    <property type="entry name" value="CBS"/>
    <property type="match status" value="2"/>
</dbReference>
<dbReference type="Pfam" id="PF00478">
    <property type="entry name" value="IMPDH"/>
    <property type="match status" value="1"/>
</dbReference>
<dbReference type="PIRSF" id="PIRSF000130">
    <property type="entry name" value="IMPDH"/>
    <property type="match status" value="1"/>
</dbReference>
<dbReference type="SMART" id="SM00116">
    <property type="entry name" value="CBS"/>
    <property type="match status" value="2"/>
</dbReference>
<dbReference type="SMART" id="SM01240">
    <property type="entry name" value="IMPDH"/>
    <property type="match status" value="1"/>
</dbReference>
<dbReference type="SUPFAM" id="SSF54631">
    <property type="entry name" value="CBS-domain pair"/>
    <property type="match status" value="1"/>
</dbReference>
<dbReference type="SUPFAM" id="SSF51412">
    <property type="entry name" value="Inosine monophosphate dehydrogenase (IMPDH)"/>
    <property type="match status" value="1"/>
</dbReference>
<dbReference type="PROSITE" id="PS51371">
    <property type="entry name" value="CBS"/>
    <property type="match status" value="2"/>
</dbReference>
<dbReference type="PROSITE" id="PS00487">
    <property type="entry name" value="IMP_DH_GMP_RED"/>
    <property type="match status" value="1"/>
</dbReference>
<comment type="function">
    <text evidence="1">Catalyzes the conversion of inosine 5'-phosphate (IMP) to xanthosine 5'-phosphate (XMP), the first committed and rate-limiting step in the de novo synthesis of guanine nucleotides, and therefore plays an important role in the regulation of cell growth.</text>
</comment>
<comment type="catalytic activity">
    <reaction evidence="1">
        <text>IMP + NAD(+) + H2O = XMP + NADH + H(+)</text>
        <dbReference type="Rhea" id="RHEA:11708"/>
        <dbReference type="ChEBI" id="CHEBI:15377"/>
        <dbReference type="ChEBI" id="CHEBI:15378"/>
        <dbReference type="ChEBI" id="CHEBI:57464"/>
        <dbReference type="ChEBI" id="CHEBI:57540"/>
        <dbReference type="ChEBI" id="CHEBI:57945"/>
        <dbReference type="ChEBI" id="CHEBI:58053"/>
        <dbReference type="EC" id="1.1.1.205"/>
    </reaction>
</comment>
<comment type="cofactor">
    <cofactor evidence="1">
        <name>K(+)</name>
        <dbReference type="ChEBI" id="CHEBI:29103"/>
    </cofactor>
</comment>
<comment type="activity regulation">
    <text evidence="1">Mycophenolic acid (MPA) is a non-competitive inhibitor that prevents formation of the closed enzyme conformation by binding to the same site as the amobile flap. In contrast, mizoribine monophosphate (MZP) is a competitive inhibitor that induces the closed conformation. MPA is a potent inhibitor of mammalian IMPDHs but a poor inhibitor of the bacterial enzymes. MZP is a more potent inhibitor of bacterial IMPDH.</text>
</comment>
<comment type="pathway">
    <text evidence="1">Purine metabolism; XMP biosynthesis via de novo pathway; XMP from IMP: step 1/1.</text>
</comment>
<comment type="subunit">
    <text evidence="1">Homotetramer.</text>
</comment>
<comment type="similarity">
    <text evidence="1">Belongs to the IMPDH/GMPR family.</text>
</comment>
<name>IMDH_STAES</name>